<gene>
    <name evidence="1" type="primary">nhaA</name>
    <name type="ordered locus">HPG27_1490</name>
</gene>
<sequence length="438" mass="47784">MNVKKTENALSVTLKNFIKSESFGGIFLFLNAVLAMVVANSFLKESYFALWHTPFGFQIGDFFIGFSLHNWIDDVLMALFFLMIGLEIKRELLFGELSSFKKASFPVIAALGGMIAPGLIYFFLNADTPSQHGFGIPMATDIAFALGVIMLLGKRVPTALKVFLITLAVADDLGAIVVIALFYTTNLKFAWLLGALGVVLILAVLNRLNIRSLIPYLLLGVLLWFCVHQSGIHATIAAVVLAFMIPVKIPKDSKNVELLELGKRYAETSSGVLLTKEQQEILHSIEEKASALQSPLERLEHFLAPISGYFIMPLFAFANAGVSVDSSINLEVDKVLLGVILGLCLGKPLGIFLITFISEKLKITARPKGISWWHILGAGLLAGIGFTMSMFISNLAFTSEHKDAMEVAKIAILLGSLISGIIGALYLFVLDKRAALKK</sequence>
<protein>
    <recommendedName>
        <fullName evidence="1">Na(+)/H(+) antiporter NhaA</fullName>
    </recommendedName>
    <alternativeName>
        <fullName evidence="1">Sodium/proton antiporter NhaA</fullName>
    </alternativeName>
</protein>
<accession>B5Z9I3</accession>
<dbReference type="EMBL" id="CP001173">
    <property type="protein sequence ID" value="ACI28232.1"/>
    <property type="molecule type" value="Genomic_DNA"/>
</dbReference>
<dbReference type="RefSeq" id="WP_001101289.1">
    <property type="nucleotide sequence ID" value="NC_011333.1"/>
</dbReference>
<dbReference type="SMR" id="B5Z9I3"/>
<dbReference type="KEGG" id="hpg:HPG27_1490"/>
<dbReference type="HOGENOM" id="CLU_015803_1_2_7"/>
<dbReference type="Proteomes" id="UP000001735">
    <property type="component" value="Chromosome"/>
</dbReference>
<dbReference type="GO" id="GO:0005886">
    <property type="term" value="C:plasma membrane"/>
    <property type="evidence" value="ECO:0007669"/>
    <property type="project" value="UniProtKB-SubCell"/>
</dbReference>
<dbReference type="GO" id="GO:0015385">
    <property type="term" value="F:sodium:proton antiporter activity"/>
    <property type="evidence" value="ECO:0007669"/>
    <property type="project" value="TreeGrafter"/>
</dbReference>
<dbReference type="GO" id="GO:0006885">
    <property type="term" value="P:regulation of pH"/>
    <property type="evidence" value="ECO:0007669"/>
    <property type="project" value="InterPro"/>
</dbReference>
<dbReference type="Gene3D" id="1.20.1530.10">
    <property type="entry name" value="Na+/H+ antiporter like domain"/>
    <property type="match status" value="1"/>
</dbReference>
<dbReference type="HAMAP" id="MF_01844">
    <property type="entry name" value="NhaA"/>
    <property type="match status" value="1"/>
</dbReference>
<dbReference type="InterPro" id="IPR023171">
    <property type="entry name" value="Na/H_antiporter_dom_sf"/>
</dbReference>
<dbReference type="InterPro" id="IPR004670">
    <property type="entry name" value="NhaA"/>
</dbReference>
<dbReference type="NCBIfam" id="TIGR00773">
    <property type="entry name" value="NhaA"/>
    <property type="match status" value="1"/>
</dbReference>
<dbReference type="NCBIfam" id="NF011428">
    <property type="entry name" value="PRK14856.1"/>
    <property type="match status" value="1"/>
</dbReference>
<dbReference type="PANTHER" id="PTHR30341:SF0">
    <property type="entry name" value="NA(+)_H(+) ANTIPORTER NHAA"/>
    <property type="match status" value="1"/>
</dbReference>
<dbReference type="PANTHER" id="PTHR30341">
    <property type="entry name" value="SODIUM ION/PROTON ANTIPORTER NHAA-RELATED"/>
    <property type="match status" value="1"/>
</dbReference>
<dbReference type="Pfam" id="PF06965">
    <property type="entry name" value="Na_H_antiport_1"/>
    <property type="match status" value="1"/>
</dbReference>
<name>NHAA_HELPG</name>
<evidence type="ECO:0000255" key="1">
    <source>
        <dbReference type="HAMAP-Rule" id="MF_01844"/>
    </source>
</evidence>
<keyword id="KW-0050">Antiport</keyword>
<keyword id="KW-0997">Cell inner membrane</keyword>
<keyword id="KW-1003">Cell membrane</keyword>
<keyword id="KW-0406">Ion transport</keyword>
<keyword id="KW-0472">Membrane</keyword>
<keyword id="KW-1185">Reference proteome</keyword>
<keyword id="KW-0915">Sodium</keyword>
<keyword id="KW-0739">Sodium transport</keyword>
<keyword id="KW-0812">Transmembrane</keyword>
<keyword id="KW-1133">Transmembrane helix</keyword>
<keyword id="KW-0813">Transport</keyword>
<comment type="function">
    <text evidence="1">Na(+)/H(+) antiporter that extrudes sodium in exchange for external protons.</text>
</comment>
<comment type="catalytic activity">
    <reaction evidence="1">
        <text>Na(+)(in) + 2 H(+)(out) = Na(+)(out) + 2 H(+)(in)</text>
        <dbReference type="Rhea" id="RHEA:29251"/>
        <dbReference type="ChEBI" id="CHEBI:15378"/>
        <dbReference type="ChEBI" id="CHEBI:29101"/>
    </reaction>
    <physiologicalReaction direction="left-to-right" evidence="1">
        <dbReference type="Rhea" id="RHEA:29252"/>
    </physiologicalReaction>
</comment>
<comment type="subcellular location">
    <subcellularLocation>
        <location evidence="1">Cell inner membrane</location>
        <topology evidence="1">Multi-pass membrane protein</topology>
    </subcellularLocation>
</comment>
<comment type="similarity">
    <text evidence="1">Belongs to the NhaA Na(+)/H(+) (TC 2.A.33) antiporter family.</text>
</comment>
<proteinExistence type="inferred from homology"/>
<feature type="chain" id="PRO_1000188438" description="Na(+)/H(+) antiporter NhaA">
    <location>
        <begin position="1"/>
        <end position="438"/>
    </location>
</feature>
<feature type="transmembrane region" description="Helical" evidence="1">
    <location>
        <begin position="23"/>
        <end position="43"/>
    </location>
</feature>
<feature type="transmembrane region" description="Helical" evidence="1">
    <location>
        <begin position="62"/>
        <end position="82"/>
    </location>
</feature>
<feature type="transmembrane region" description="Helical" evidence="1">
    <location>
        <begin position="104"/>
        <end position="124"/>
    </location>
</feature>
<feature type="transmembrane region" description="Helical" evidence="1">
    <location>
        <begin position="133"/>
        <end position="153"/>
    </location>
</feature>
<feature type="transmembrane region" description="Helical" evidence="1">
    <location>
        <begin position="162"/>
        <end position="182"/>
    </location>
</feature>
<feature type="transmembrane region" description="Helical" evidence="1">
    <location>
        <begin position="185"/>
        <end position="205"/>
    </location>
</feature>
<feature type="transmembrane region" description="Helical" evidence="1">
    <location>
        <begin position="212"/>
        <end position="232"/>
    </location>
</feature>
<feature type="transmembrane region" description="Helical" evidence="1">
    <location>
        <begin position="302"/>
        <end position="322"/>
    </location>
</feature>
<feature type="transmembrane region" description="Helical" evidence="1">
    <location>
        <begin position="337"/>
        <end position="357"/>
    </location>
</feature>
<feature type="transmembrane region" description="Helical" evidence="1">
    <location>
        <begin position="372"/>
        <end position="392"/>
    </location>
</feature>
<feature type="transmembrane region" description="Helical" evidence="1">
    <location>
        <begin position="410"/>
        <end position="430"/>
    </location>
</feature>
<reference key="1">
    <citation type="journal article" date="2009" name="J. Bacteriol.">
        <title>The complete genome sequence of Helicobacter pylori strain G27.</title>
        <authorList>
            <person name="Baltrus D.A."/>
            <person name="Amieva M.R."/>
            <person name="Covacci A."/>
            <person name="Lowe T.M."/>
            <person name="Merrell D.S."/>
            <person name="Ottemann K.M."/>
            <person name="Stein M."/>
            <person name="Salama N.R."/>
            <person name="Guillemin K."/>
        </authorList>
    </citation>
    <scope>NUCLEOTIDE SEQUENCE [LARGE SCALE GENOMIC DNA]</scope>
    <source>
        <strain>G27</strain>
    </source>
</reference>
<organism>
    <name type="scientific">Helicobacter pylori (strain G27)</name>
    <dbReference type="NCBI Taxonomy" id="563041"/>
    <lineage>
        <taxon>Bacteria</taxon>
        <taxon>Pseudomonadati</taxon>
        <taxon>Campylobacterota</taxon>
        <taxon>Epsilonproteobacteria</taxon>
        <taxon>Campylobacterales</taxon>
        <taxon>Helicobacteraceae</taxon>
        <taxon>Helicobacter</taxon>
    </lineage>
</organism>